<evidence type="ECO:0000255" key="1">
    <source>
        <dbReference type="HAMAP-Rule" id="MF_00693"/>
    </source>
</evidence>
<evidence type="ECO:0000256" key="2">
    <source>
        <dbReference type="SAM" id="MobiDB-lite"/>
    </source>
</evidence>
<sequence length="240" mass="26048">MSGHSKWHNIQGRKNAQDAKRGKIFQKISHDLYVAAKAGGADPSANASLRLVMDKAKAANMPKDNVQRALDKATGAGDVKFEEATYEGYAPGGIAVLVETSTDNINRTVSNVRNSFNHHGGSLGTSGSVSFQFDRRGHFVIDRQSHPDITEDQVMEDAIEAGAEDVQTSDDAFEIFSQPADFAAVEGALTDKGYDLAESEITMIPQNPVEVPEADQEKFEKLIDELEDNDDVLAVYTTAD</sequence>
<protein>
    <recommendedName>
        <fullName evidence="1">Probable transcriptional regulatory protein OEOE_0768</fullName>
    </recommendedName>
</protein>
<accession>Q04FS7</accession>
<organism>
    <name type="scientific">Oenococcus oeni (strain ATCC BAA-331 / PSU-1)</name>
    <dbReference type="NCBI Taxonomy" id="203123"/>
    <lineage>
        <taxon>Bacteria</taxon>
        <taxon>Bacillati</taxon>
        <taxon>Bacillota</taxon>
        <taxon>Bacilli</taxon>
        <taxon>Lactobacillales</taxon>
        <taxon>Lactobacillaceae</taxon>
        <taxon>Oenococcus</taxon>
    </lineage>
</organism>
<keyword id="KW-0963">Cytoplasm</keyword>
<keyword id="KW-0238">DNA-binding</keyword>
<keyword id="KW-1185">Reference proteome</keyword>
<keyword id="KW-0804">Transcription</keyword>
<keyword id="KW-0805">Transcription regulation</keyword>
<reference key="1">
    <citation type="journal article" date="2006" name="Proc. Natl. Acad. Sci. U.S.A.">
        <title>Comparative genomics of the lactic acid bacteria.</title>
        <authorList>
            <person name="Makarova K.S."/>
            <person name="Slesarev A."/>
            <person name="Wolf Y.I."/>
            <person name="Sorokin A."/>
            <person name="Mirkin B."/>
            <person name="Koonin E.V."/>
            <person name="Pavlov A."/>
            <person name="Pavlova N."/>
            <person name="Karamychev V."/>
            <person name="Polouchine N."/>
            <person name="Shakhova V."/>
            <person name="Grigoriev I."/>
            <person name="Lou Y."/>
            <person name="Rohksar D."/>
            <person name="Lucas S."/>
            <person name="Huang K."/>
            <person name="Goodstein D.M."/>
            <person name="Hawkins T."/>
            <person name="Plengvidhya V."/>
            <person name="Welker D."/>
            <person name="Hughes J."/>
            <person name="Goh Y."/>
            <person name="Benson A."/>
            <person name="Baldwin K."/>
            <person name="Lee J.-H."/>
            <person name="Diaz-Muniz I."/>
            <person name="Dosti B."/>
            <person name="Smeianov V."/>
            <person name="Wechter W."/>
            <person name="Barabote R."/>
            <person name="Lorca G."/>
            <person name="Altermann E."/>
            <person name="Barrangou R."/>
            <person name="Ganesan B."/>
            <person name="Xie Y."/>
            <person name="Rawsthorne H."/>
            <person name="Tamir D."/>
            <person name="Parker C."/>
            <person name="Breidt F."/>
            <person name="Broadbent J.R."/>
            <person name="Hutkins R."/>
            <person name="O'Sullivan D."/>
            <person name="Steele J."/>
            <person name="Unlu G."/>
            <person name="Saier M.H. Jr."/>
            <person name="Klaenhammer T."/>
            <person name="Richardson P."/>
            <person name="Kozyavkin S."/>
            <person name="Weimer B.C."/>
            <person name="Mills D.A."/>
        </authorList>
    </citation>
    <scope>NUCLEOTIDE SEQUENCE [LARGE SCALE GENOMIC DNA]</scope>
    <source>
        <strain>ATCC BAA-331 / PSU-1</strain>
    </source>
</reference>
<name>Y768_OENOB</name>
<dbReference type="EMBL" id="CP000411">
    <property type="protein sequence ID" value="ABJ56695.1"/>
    <property type="molecule type" value="Genomic_DNA"/>
</dbReference>
<dbReference type="RefSeq" id="WP_002818648.1">
    <property type="nucleotide sequence ID" value="NC_008528.1"/>
</dbReference>
<dbReference type="SMR" id="Q04FS7"/>
<dbReference type="STRING" id="203123.OEOE_0768"/>
<dbReference type="KEGG" id="ooe:OEOE_0768"/>
<dbReference type="eggNOG" id="COG0217">
    <property type="taxonomic scope" value="Bacteria"/>
</dbReference>
<dbReference type="HOGENOM" id="CLU_062974_3_0_9"/>
<dbReference type="Proteomes" id="UP000000774">
    <property type="component" value="Chromosome"/>
</dbReference>
<dbReference type="GO" id="GO:0005829">
    <property type="term" value="C:cytosol"/>
    <property type="evidence" value="ECO:0007669"/>
    <property type="project" value="TreeGrafter"/>
</dbReference>
<dbReference type="GO" id="GO:0003677">
    <property type="term" value="F:DNA binding"/>
    <property type="evidence" value="ECO:0007669"/>
    <property type="project" value="UniProtKB-UniRule"/>
</dbReference>
<dbReference type="GO" id="GO:0006355">
    <property type="term" value="P:regulation of DNA-templated transcription"/>
    <property type="evidence" value="ECO:0007669"/>
    <property type="project" value="UniProtKB-UniRule"/>
</dbReference>
<dbReference type="FunFam" id="1.10.10.200:FF:000002">
    <property type="entry name" value="Probable transcriptional regulatory protein CLM62_37755"/>
    <property type="match status" value="1"/>
</dbReference>
<dbReference type="FunFam" id="3.30.70.980:FF:000002">
    <property type="entry name" value="Probable transcriptional regulatory protein YebC"/>
    <property type="match status" value="1"/>
</dbReference>
<dbReference type="Gene3D" id="1.10.10.200">
    <property type="match status" value="1"/>
</dbReference>
<dbReference type="Gene3D" id="3.30.70.980">
    <property type="match status" value="2"/>
</dbReference>
<dbReference type="HAMAP" id="MF_00693">
    <property type="entry name" value="Transcrip_reg_TACO1"/>
    <property type="match status" value="1"/>
</dbReference>
<dbReference type="InterPro" id="IPR017856">
    <property type="entry name" value="Integrase-like_N"/>
</dbReference>
<dbReference type="InterPro" id="IPR048300">
    <property type="entry name" value="TACO1_YebC-like_2nd/3rd_dom"/>
</dbReference>
<dbReference type="InterPro" id="IPR049083">
    <property type="entry name" value="TACO1_YebC_N"/>
</dbReference>
<dbReference type="InterPro" id="IPR002876">
    <property type="entry name" value="Transcrip_reg_TACO1-like"/>
</dbReference>
<dbReference type="InterPro" id="IPR026564">
    <property type="entry name" value="Transcrip_reg_TACO1-like_dom3"/>
</dbReference>
<dbReference type="InterPro" id="IPR029072">
    <property type="entry name" value="YebC-like"/>
</dbReference>
<dbReference type="NCBIfam" id="NF001030">
    <property type="entry name" value="PRK00110.1"/>
    <property type="match status" value="1"/>
</dbReference>
<dbReference type="NCBIfam" id="NF009044">
    <property type="entry name" value="PRK12378.1"/>
    <property type="match status" value="1"/>
</dbReference>
<dbReference type="NCBIfam" id="TIGR01033">
    <property type="entry name" value="YebC/PmpR family DNA-binding transcriptional regulator"/>
    <property type="match status" value="1"/>
</dbReference>
<dbReference type="PANTHER" id="PTHR12532:SF6">
    <property type="entry name" value="TRANSCRIPTIONAL REGULATORY PROTEIN YEBC-RELATED"/>
    <property type="match status" value="1"/>
</dbReference>
<dbReference type="PANTHER" id="PTHR12532">
    <property type="entry name" value="TRANSLATIONAL ACTIVATOR OF CYTOCHROME C OXIDASE 1"/>
    <property type="match status" value="1"/>
</dbReference>
<dbReference type="Pfam" id="PF20772">
    <property type="entry name" value="TACO1_YebC_N"/>
    <property type="match status" value="1"/>
</dbReference>
<dbReference type="Pfam" id="PF01709">
    <property type="entry name" value="Transcrip_reg"/>
    <property type="match status" value="1"/>
</dbReference>
<dbReference type="SUPFAM" id="SSF75625">
    <property type="entry name" value="YebC-like"/>
    <property type="match status" value="1"/>
</dbReference>
<proteinExistence type="inferred from homology"/>
<feature type="chain" id="PRO_1000045350" description="Probable transcriptional regulatory protein OEOE_0768">
    <location>
        <begin position="1"/>
        <end position="240"/>
    </location>
</feature>
<feature type="region of interest" description="Disordered" evidence="2">
    <location>
        <begin position="1"/>
        <end position="21"/>
    </location>
</feature>
<comment type="subcellular location">
    <subcellularLocation>
        <location evidence="1">Cytoplasm</location>
    </subcellularLocation>
</comment>
<comment type="similarity">
    <text evidence="1">Belongs to the TACO1 family.</text>
</comment>
<gene>
    <name type="ordered locus">OEOE_0768</name>
</gene>